<sequence>MGKITITVGDITRFEGDAIVNAANHTLLGGGGVDGAIHRAAGPELLEECRTLNGCPTGESKITGGYNLPAQYVIHTVGPVWHGGQHGEPELLASCYRTSLSIALDKGLKSIAFPCISTGVYRYPKDQAARIALATIGEIIADRPIDVTIVCFSEADKEFYITQD</sequence>
<evidence type="ECO:0000255" key="1">
    <source>
        <dbReference type="PROSITE-ProRule" id="PRU00490"/>
    </source>
</evidence>
<evidence type="ECO:0000269" key="2">
    <source>
    </source>
</evidence>
<evidence type="ECO:0000305" key="3"/>
<evidence type="ECO:0000312" key="4">
    <source>
        <dbReference type="EMBL" id="AAQ66780.1"/>
    </source>
</evidence>
<evidence type="ECO:0000312" key="5">
    <source>
        <dbReference type="Proteomes" id="UP000000588"/>
    </source>
</evidence>
<name>MACRO_PORGI</name>
<comment type="induction">
    <text evidence="2">Very low background expression levels, induced by oxidative stress due to hydrogen peroxide.</text>
</comment>
<comment type="disruption phenotype">
    <text evidence="2">Increased sensitivity to hydrogen peroxide (PubMed:26581883). No reduction in growth rate (PubMed:26581883). No reduction in the ability to accumulate haem on cell surface (PubMed:26581883). No change in Rgp and Kgp proteolytic activity (PubMed:26581883).</text>
</comment>
<comment type="miscellaneous">
    <text evidence="2">The grpE-dnaJ-PG1777-PG1778-PG1779 genes are co-transcribed and may form an operon.</text>
</comment>
<comment type="similarity">
    <text evidence="3">Belongs to the MacroD-type family.</text>
</comment>
<accession>Q7MTZ7</accession>
<protein>
    <recommendedName>
        <fullName evidence="3">Macro domain-containing protein PG1779</fullName>
    </recommendedName>
</protein>
<keyword id="KW-1185">Reference proteome</keyword>
<proteinExistence type="evidence at transcript level"/>
<reference evidence="5" key="1">
    <citation type="journal article" date="2003" name="J. Bacteriol.">
        <title>Complete genome sequence of the oral pathogenic bacterium Porphyromonas gingivalis strain W83.</title>
        <authorList>
            <person name="Nelson K.E."/>
            <person name="Fleischmann R.D."/>
            <person name="DeBoy R.T."/>
            <person name="Paulsen I.T."/>
            <person name="Fouts D.E."/>
            <person name="Eisen J.A."/>
            <person name="Daugherty S.C."/>
            <person name="Dodson R.J."/>
            <person name="Durkin A.S."/>
            <person name="Gwinn M.L."/>
            <person name="Haft D.H."/>
            <person name="Kolonay J.F."/>
            <person name="Nelson W.C."/>
            <person name="Mason T.M."/>
            <person name="Tallon L."/>
            <person name="Gray J."/>
            <person name="Granger D."/>
            <person name="Tettelin H."/>
            <person name="Dong H."/>
            <person name="Galvin J.L."/>
            <person name="Duncan M.J."/>
            <person name="Dewhirst F.E."/>
            <person name="Fraser C.M."/>
        </authorList>
    </citation>
    <scope>NUCLEOTIDE SEQUENCE [LARGE SCALE GENOMIC DNA]</scope>
    <source>
        <strain evidence="5">ATCC BAA-308 / W83</strain>
    </source>
</reference>
<reference evidence="3" key="2">
    <citation type="journal article" date="2016" name="Microbiology">
        <title>Role of the Porphyromonas gingivalis iron-binding protein PG1777 in oxidative stress resistance.</title>
        <authorList>
            <person name="McKenzie R.M.E."/>
            <person name="Henry L.G."/>
            <person name="Boutrin M.C."/>
            <person name="Ximinies A."/>
            <person name="Fletcher H.M."/>
        </authorList>
    </citation>
    <scope>INDUCTION BY HYDROGEN PEROXIDE</scope>
    <scope>DISRUPTION PHENOTYPE</scope>
</reference>
<organism evidence="5">
    <name type="scientific">Porphyromonas gingivalis (strain ATCC BAA-308 / W83)</name>
    <dbReference type="NCBI Taxonomy" id="242619"/>
    <lineage>
        <taxon>Bacteria</taxon>
        <taxon>Pseudomonadati</taxon>
        <taxon>Bacteroidota</taxon>
        <taxon>Bacteroidia</taxon>
        <taxon>Bacteroidales</taxon>
        <taxon>Porphyromonadaceae</taxon>
        <taxon>Porphyromonas</taxon>
    </lineage>
</organism>
<feature type="chain" id="PRO_0000458856" description="Macro domain-containing protein PG1779">
    <location>
        <begin position="1"/>
        <end position="164"/>
    </location>
</feature>
<feature type="domain" description="Macro" evidence="1">
    <location>
        <begin position="1"/>
        <end position="164"/>
    </location>
</feature>
<gene>
    <name evidence="4" type="ordered locus">PG_1779</name>
</gene>
<dbReference type="EMBL" id="AE015924">
    <property type="protein sequence ID" value="AAQ66780.1"/>
    <property type="molecule type" value="Genomic_DNA"/>
</dbReference>
<dbReference type="RefSeq" id="WP_005873740.1">
    <property type="nucleotide sequence ID" value="NC_002950.2"/>
</dbReference>
<dbReference type="SMR" id="Q7MTZ7"/>
<dbReference type="STRING" id="242619.PG_1779"/>
<dbReference type="EnsemblBacteria" id="AAQ66780">
    <property type="protein sequence ID" value="AAQ66780"/>
    <property type="gene ID" value="PG_1779"/>
</dbReference>
<dbReference type="GeneID" id="29256883"/>
<dbReference type="KEGG" id="pgi:PG_1779"/>
<dbReference type="eggNOG" id="COG2110">
    <property type="taxonomic scope" value="Bacteria"/>
</dbReference>
<dbReference type="HOGENOM" id="CLU_046550_5_1_10"/>
<dbReference type="Proteomes" id="UP000000588">
    <property type="component" value="Chromosome"/>
</dbReference>
<dbReference type="CDD" id="cd02908">
    <property type="entry name" value="Macro_OAADPr_deacetylase"/>
    <property type="match status" value="1"/>
</dbReference>
<dbReference type="Gene3D" id="3.40.220.10">
    <property type="entry name" value="Leucine Aminopeptidase, subunit E, domain 1"/>
    <property type="match status" value="1"/>
</dbReference>
<dbReference type="InterPro" id="IPR002589">
    <property type="entry name" value="Macro_dom"/>
</dbReference>
<dbReference type="InterPro" id="IPR043472">
    <property type="entry name" value="Macro_dom-like"/>
</dbReference>
<dbReference type="NCBIfam" id="NF001664">
    <property type="entry name" value="PRK00431.1-6"/>
    <property type="match status" value="1"/>
</dbReference>
<dbReference type="PANTHER" id="PTHR11106">
    <property type="entry name" value="GANGLIOSIDE INDUCED DIFFERENTIATION ASSOCIATED PROTEIN 2-RELATED"/>
    <property type="match status" value="1"/>
</dbReference>
<dbReference type="PANTHER" id="PTHR11106:SF27">
    <property type="entry name" value="MACRO DOMAIN-CONTAINING PROTEIN"/>
    <property type="match status" value="1"/>
</dbReference>
<dbReference type="Pfam" id="PF01661">
    <property type="entry name" value="Macro"/>
    <property type="match status" value="1"/>
</dbReference>
<dbReference type="SMART" id="SM00506">
    <property type="entry name" value="A1pp"/>
    <property type="match status" value="1"/>
</dbReference>
<dbReference type="SUPFAM" id="SSF52949">
    <property type="entry name" value="Macro domain-like"/>
    <property type="match status" value="1"/>
</dbReference>
<dbReference type="PROSITE" id="PS51154">
    <property type="entry name" value="MACRO"/>
    <property type="match status" value="1"/>
</dbReference>